<organism>
    <name type="scientific">Parafrankia sp. (strain EAN1pec)</name>
    <dbReference type="NCBI Taxonomy" id="298653"/>
    <lineage>
        <taxon>Bacteria</taxon>
        <taxon>Bacillati</taxon>
        <taxon>Actinomycetota</taxon>
        <taxon>Actinomycetes</taxon>
        <taxon>Frankiales</taxon>
        <taxon>Frankiaceae</taxon>
        <taxon>Parafrankia</taxon>
    </lineage>
</organism>
<gene>
    <name evidence="1" type="primary">atpF</name>
    <name type="ordered locus">Franean1_1020</name>
</gene>
<evidence type="ECO:0000255" key="1">
    <source>
        <dbReference type="HAMAP-Rule" id="MF_01398"/>
    </source>
</evidence>
<comment type="function">
    <text evidence="1">F(1)F(0) ATP synthase produces ATP from ADP in the presence of a proton or sodium gradient. F-type ATPases consist of two structural domains, F(1) containing the extramembraneous catalytic core and F(0) containing the membrane proton channel, linked together by a central stalk and a peripheral stalk. During catalysis, ATP synthesis in the catalytic domain of F(1) is coupled via a rotary mechanism of the central stalk subunits to proton translocation.</text>
</comment>
<comment type="function">
    <text evidence="1">Component of the F(0) channel, it forms part of the peripheral stalk, linking F(1) to F(0).</text>
</comment>
<comment type="subunit">
    <text evidence="1">F-type ATPases have 2 components, F(1) - the catalytic core - and F(0) - the membrane proton channel. F(1) has five subunits: alpha(3), beta(3), gamma(1), delta(1), epsilon(1). F(0) has three main subunits: a(1), b(2) and c(10-14). The alpha and beta chains form an alternating ring which encloses part of the gamma chain. F(1) is attached to F(0) by a central stalk formed by the gamma and epsilon chains, while a peripheral stalk is formed by the delta and b chains.</text>
</comment>
<comment type="subcellular location">
    <subcellularLocation>
        <location evidence="1">Cell membrane</location>
        <topology evidence="1">Single-pass membrane protein</topology>
    </subcellularLocation>
</comment>
<comment type="similarity">
    <text evidence="1">Belongs to the ATPase B chain family.</text>
</comment>
<sequence length="193" mass="21433">MLQNLVLAAAEEGAEHEDSVLVPPLAELIVGLLAFGLLVGFFFWKIYPQIRKTYAERAERIEGGLNRAERAEREAQALLEQYRSQLAEARSEAARIREDAQAQGRQIVEELRTQVQQEVAEIRERADAALVAERAQVVASVRREIGEIALELATRIVGRELENDTRQRQLVDDFIAGLDEAPQPDAVPAGPGV</sequence>
<protein>
    <recommendedName>
        <fullName evidence="1">ATP synthase subunit b</fullName>
    </recommendedName>
    <alternativeName>
        <fullName evidence="1">ATP synthase F(0) sector subunit b</fullName>
    </alternativeName>
    <alternativeName>
        <fullName evidence="1">ATPase subunit I</fullName>
    </alternativeName>
    <alternativeName>
        <fullName evidence="1">F-type ATPase subunit b</fullName>
        <shortName evidence="1">F-ATPase subunit b</shortName>
    </alternativeName>
</protein>
<proteinExistence type="inferred from homology"/>
<name>ATPF_PARS2</name>
<reference key="1">
    <citation type="journal article" date="2007" name="Genome Res.">
        <title>Genome characteristics of facultatively symbiotic Frankia sp. strains reflect host range and host plant biogeography.</title>
        <authorList>
            <person name="Normand P."/>
            <person name="Lapierre P."/>
            <person name="Tisa L.S."/>
            <person name="Gogarten J.P."/>
            <person name="Alloisio N."/>
            <person name="Bagnarol E."/>
            <person name="Bassi C.A."/>
            <person name="Berry A.M."/>
            <person name="Bickhart D.M."/>
            <person name="Choisne N."/>
            <person name="Couloux A."/>
            <person name="Cournoyer B."/>
            <person name="Cruveiller S."/>
            <person name="Daubin V."/>
            <person name="Demange N."/>
            <person name="Francino M.P."/>
            <person name="Goltsman E."/>
            <person name="Huang Y."/>
            <person name="Kopp O.R."/>
            <person name="Labarre L."/>
            <person name="Lapidus A."/>
            <person name="Lavire C."/>
            <person name="Marechal J."/>
            <person name="Martinez M."/>
            <person name="Mastronunzio J.E."/>
            <person name="Mullin B.C."/>
            <person name="Niemann J."/>
            <person name="Pujic P."/>
            <person name="Rawnsley T."/>
            <person name="Rouy Z."/>
            <person name="Schenowitz C."/>
            <person name="Sellstedt A."/>
            <person name="Tavares F."/>
            <person name="Tomkins J.P."/>
            <person name="Vallenet D."/>
            <person name="Valverde C."/>
            <person name="Wall L.G."/>
            <person name="Wang Y."/>
            <person name="Medigue C."/>
            <person name="Benson D.R."/>
        </authorList>
    </citation>
    <scope>NUCLEOTIDE SEQUENCE [LARGE SCALE GENOMIC DNA]</scope>
    <source>
        <strain>EAN1pec</strain>
    </source>
</reference>
<keyword id="KW-0066">ATP synthesis</keyword>
<keyword id="KW-1003">Cell membrane</keyword>
<keyword id="KW-0138">CF(0)</keyword>
<keyword id="KW-0375">Hydrogen ion transport</keyword>
<keyword id="KW-0406">Ion transport</keyword>
<keyword id="KW-0472">Membrane</keyword>
<keyword id="KW-0812">Transmembrane</keyword>
<keyword id="KW-1133">Transmembrane helix</keyword>
<keyword id="KW-0813">Transport</keyword>
<dbReference type="EMBL" id="CP000820">
    <property type="protein sequence ID" value="ABW10476.1"/>
    <property type="molecule type" value="Genomic_DNA"/>
</dbReference>
<dbReference type="RefSeq" id="WP_020458658.1">
    <property type="nucleotide sequence ID" value="NC_009921.1"/>
</dbReference>
<dbReference type="SMR" id="A8L3W1"/>
<dbReference type="STRING" id="298653.Franean1_1020"/>
<dbReference type="KEGG" id="fre:Franean1_1020"/>
<dbReference type="eggNOG" id="COG0711">
    <property type="taxonomic scope" value="Bacteria"/>
</dbReference>
<dbReference type="HOGENOM" id="CLU_079215_5_1_11"/>
<dbReference type="GO" id="GO:0005886">
    <property type="term" value="C:plasma membrane"/>
    <property type="evidence" value="ECO:0007669"/>
    <property type="project" value="UniProtKB-SubCell"/>
</dbReference>
<dbReference type="GO" id="GO:0045259">
    <property type="term" value="C:proton-transporting ATP synthase complex"/>
    <property type="evidence" value="ECO:0007669"/>
    <property type="project" value="UniProtKB-KW"/>
</dbReference>
<dbReference type="GO" id="GO:0046933">
    <property type="term" value="F:proton-transporting ATP synthase activity, rotational mechanism"/>
    <property type="evidence" value="ECO:0007669"/>
    <property type="project" value="UniProtKB-UniRule"/>
</dbReference>
<dbReference type="GO" id="GO:0046961">
    <property type="term" value="F:proton-transporting ATPase activity, rotational mechanism"/>
    <property type="evidence" value="ECO:0007669"/>
    <property type="project" value="TreeGrafter"/>
</dbReference>
<dbReference type="CDD" id="cd06503">
    <property type="entry name" value="ATP-synt_Fo_b"/>
    <property type="match status" value="1"/>
</dbReference>
<dbReference type="Gene3D" id="1.20.5.620">
    <property type="entry name" value="F1F0 ATP synthase subunit B, membrane domain"/>
    <property type="match status" value="1"/>
</dbReference>
<dbReference type="HAMAP" id="MF_01398">
    <property type="entry name" value="ATP_synth_b_bprime"/>
    <property type="match status" value="1"/>
</dbReference>
<dbReference type="InterPro" id="IPR028987">
    <property type="entry name" value="ATP_synth_B-like_membr_sf"/>
</dbReference>
<dbReference type="InterPro" id="IPR002146">
    <property type="entry name" value="ATP_synth_b/b'su_bac/chlpt"/>
</dbReference>
<dbReference type="InterPro" id="IPR005864">
    <property type="entry name" value="ATP_synth_F0_bsu_bac"/>
</dbReference>
<dbReference type="InterPro" id="IPR050059">
    <property type="entry name" value="ATP_synthase_B_chain"/>
</dbReference>
<dbReference type="NCBIfam" id="TIGR01144">
    <property type="entry name" value="ATP_synt_b"/>
    <property type="match status" value="1"/>
</dbReference>
<dbReference type="NCBIfam" id="NF004412">
    <property type="entry name" value="PRK05759.1-3"/>
    <property type="match status" value="1"/>
</dbReference>
<dbReference type="PANTHER" id="PTHR33445:SF1">
    <property type="entry name" value="ATP SYNTHASE SUBUNIT B"/>
    <property type="match status" value="1"/>
</dbReference>
<dbReference type="PANTHER" id="PTHR33445">
    <property type="entry name" value="ATP SYNTHASE SUBUNIT B', CHLOROPLASTIC"/>
    <property type="match status" value="1"/>
</dbReference>
<dbReference type="Pfam" id="PF00430">
    <property type="entry name" value="ATP-synt_B"/>
    <property type="match status" value="1"/>
</dbReference>
<dbReference type="SUPFAM" id="SSF81573">
    <property type="entry name" value="F1F0 ATP synthase subunit B, membrane domain"/>
    <property type="match status" value="1"/>
</dbReference>
<accession>A8L3W1</accession>
<feature type="chain" id="PRO_0000368498" description="ATP synthase subunit b">
    <location>
        <begin position="1"/>
        <end position="193"/>
    </location>
</feature>
<feature type="transmembrane region" description="Helical" evidence="1">
    <location>
        <begin position="24"/>
        <end position="44"/>
    </location>
</feature>